<proteinExistence type="inferred from homology"/>
<keyword id="KW-1003">Cell membrane</keyword>
<keyword id="KW-1015">Disulfide bond</keyword>
<keyword id="KW-0325">Glycoprotein</keyword>
<keyword id="KW-0336">GPI-anchor</keyword>
<keyword id="KW-0449">Lipoprotein</keyword>
<keyword id="KW-0461">Malaria</keyword>
<keyword id="KW-0472">Membrane</keyword>
<keyword id="KW-0477">Merozoite</keyword>
<keyword id="KW-0677">Repeat</keyword>
<keyword id="KW-0732">Signal</keyword>
<gene>
    <name evidence="3" type="primary">MSP2</name>
    <name evidence="7" type="synonym">MSA2</name>
</gene>
<reference key="1">
    <citation type="journal article" date="1995" name="Mol. Biochem. Parasitol.">
        <title>Merozoite surface antigen 2 (MSA-2) gene of Plasmodium falciparum strains from India.</title>
        <authorList>
            <person name="Bhattacharya P."/>
            <person name="Malhotra P."/>
            <person name="Sharma P."/>
            <person name="Okenu D.M.N."/>
            <person name="Chauhan V.S."/>
        </authorList>
    </citation>
    <scope>NUCLEOTIDE SEQUENCE [GENOMIC DNA]</scope>
    <scope>POLYMORPHISM</scope>
    <scope>REPEATS</scope>
</reference>
<comment type="function">
    <text evidence="2">May play a role in the merozoite attachment to the erythrocyte.</text>
</comment>
<comment type="subcellular location">
    <subcellularLocation>
        <location evidence="2">Cell membrane</location>
        <topology evidence="1">Lipid-anchor</topology>
        <topology evidence="1">GPI-anchor</topology>
    </subcellularLocation>
    <text evidence="2">During host erythrocyte invasion by merozoites, carried into invaded erythrocytes where it is rapidly degraded.</text>
</comment>
<comment type="domain">
    <text evidence="2">The N-terminal region appears to be involved in lipid binding.</text>
</comment>
<comment type="polymorphism">
    <text evidence="6">The sequence varies across Plasmodium strains (PubMed:8719253). All variants share conserved N- and C-terminal regions; however, they belong to two allelic families, represented by 3D7 strain and FC27 strain sequences respectively, distinguished by tandem repeats and dimorphic flanking sequences within the central region of the protein (PubMed:8719253).</text>
</comment>
<comment type="miscellaneous">
    <text evidence="6">Same sequence in Indian isolates FIS1 and FIJ4.</text>
</comment>
<feature type="signal peptide" evidence="4">
    <location>
        <begin position="1"/>
        <end position="20"/>
    </location>
</feature>
<feature type="chain" id="PRO_0000024600" description="Merozoite surface protein 2">
    <location>
        <begin position="21"/>
        <end position="238"/>
    </location>
</feature>
<feature type="propeptide" id="PRO_0000024601" description="Removed in mature form" evidence="1">
    <location>
        <begin position="239"/>
        <end position="264"/>
    </location>
</feature>
<feature type="repeat" description="1" evidence="6">
    <location>
        <begin position="60"/>
        <end position="91"/>
    </location>
</feature>
<feature type="repeat" description="2" evidence="6">
    <location>
        <begin position="92"/>
        <end position="123"/>
    </location>
</feature>
<feature type="region of interest" description="Polymorphic region" evidence="6">
    <location>
        <begin position="44"/>
        <end position="190"/>
    </location>
</feature>
<feature type="region of interest" description="Disordered" evidence="5">
    <location>
        <begin position="46"/>
        <end position="225"/>
    </location>
</feature>
<feature type="region of interest" description="2 X 32 AA perfects repeats" evidence="6">
    <location>
        <begin position="60"/>
        <end position="123"/>
    </location>
</feature>
<feature type="compositionally biased region" description="Low complexity" evidence="5">
    <location>
        <begin position="70"/>
        <end position="81"/>
    </location>
</feature>
<feature type="compositionally biased region" description="Polar residues" evidence="5">
    <location>
        <begin position="82"/>
        <end position="101"/>
    </location>
</feature>
<feature type="compositionally biased region" description="Low complexity" evidence="5">
    <location>
        <begin position="102"/>
        <end position="145"/>
    </location>
</feature>
<feature type="compositionally biased region" description="Basic and acidic residues" evidence="5">
    <location>
        <begin position="154"/>
        <end position="166"/>
    </location>
</feature>
<feature type="lipid moiety-binding region" description="GPI-anchor amidated asparagine" evidence="1">
    <location>
        <position position="238"/>
    </location>
</feature>
<feature type="glycosylation site" description="N-linked (GlcNAc...) asparagine" evidence="4">
    <location>
        <position position="22"/>
    </location>
</feature>
<feature type="glycosylation site" description="N-linked (GlcNAc...) asparagine" evidence="4">
    <location>
        <position position="36"/>
    </location>
</feature>
<feature type="glycosylation site" description="N-linked (GlcNAc...) asparagine" evidence="4">
    <location>
        <position position="152"/>
    </location>
</feature>
<feature type="glycosylation site" description="N-linked (GlcNAc...) asparagine" evidence="4">
    <location>
        <position position="168"/>
    </location>
</feature>
<feature type="glycosylation site" description="N-linked (GlcNAc...) asparagine" evidence="4">
    <location>
        <position position="213"/>
    </location>
</feature>
<feature type="glycosylation site" description="N-linked (GlcNAc...) asparagine" evidence="4">
    <location>
        <position position="237"/>
    </location>
</feature>
<feature type="glycosylation site" description="N-linked (GlcNAc...) asparagine" evidence="4">
    <location>
        <position position="238"/>
    </location>
</feature>
<feature type="disulfide bond" evidence="2">
    <location>
        <begin position="221"/>
        <end position="229"/>
    </location>
</feature>
<name>MSA2_PLAFJ</name>
<organism>
    <name type="scientific">Plasmodium falciparum (isolate fid3 / India)</name>
    <dbReference type="NCBI Taxonomy" id="70152"/>
    <lineage>
        <taxon>Eukaryota</taxon>
        <taxon>Sar</taxon>
        <taxon>Alveolata</taxon>
        <taxon>Apicomplexa</taxon>
        <taxon>Aconoidasida</taxon>
        <taxon>Haemosporida</taxon>
        <taxon>Plasmodiidae</taxon>
        <taxon>Plasmodium</taxon>
        <taxon>Plasmodium (Laverania)</taxon>
    </lineage>
</organism>
<accession>P50499</accession>
<sequence>MKVIKTLSIINFFIFVTFNIKNESKYSNTFINNAYNMSIRRSMANEGSNTNSVGANAPNADTIASGSQRSTNSASTSTTNNGESQTTTPTAADTIASGSQRSTNSASTSTTNNGESQTTTPTAADTPTTTESNSPSPPITTTESSKFWQCTNKTDGKGEESEKQNELNESTEEGPKAPQEPQTAENENPAAPENKGTGQHGHMHGSRNNHPQNTSDSQKECTDGNKENCGAATSLLNNSSNIASINKFVVLISATLVLSFAIFI</sequence>
<protein>
    <recommendedName>
        <fullName evidence="3">Merozoite surface protein 2</fullName>
    </recommendedName>
    <alternativeName>
        <fullName evidence="7">Merozoite surface antigen 2</fullName>
        <shortName evidence="7">MSA-2</shortName>
    </alternativeName>
</protein>
<evidence type="ECO:0000250" key="1">
    <source>
        <dbReference type="UniProtKB" id="P19260"/>
    </source>
</evidence>
<evidence type="ECO:0000250" key="2">
    <source>
        <dbReference type="UniProtKB" id="P19599"/>
    </source>
</evidence>
<evidence type="ECO:0000250" key="3">
    <source>
        <dbReference type="UniProtKB" id="P50498"/>
    </source>
</evidence>
<evidence type="ECO:0000255" key="4"/>
<evidence type="ECO:0000256" key="5">
    <source>
        <dbReference type="SAM" id="MobiDB-lite"/>
    </source>
</evidence>
<evidence type="ECO:0000269" key="6">
    <source>
    </source>
</evidence>
<evidence type="ECO:0000303" key="7">
    <source>
    </source>
</evidence>
<dbReference type="EMBL" id="X87249">
    <property type="protein sequence ID" value="CAA60699.1"/>
    <property type="molecule type" value="Genomic_DNA"/>
</dbReference>
<dbReference type="PIR" id="S55367">
    <property type="entry name" value="S55367"/>
</dbReference>
<dbReference type="GlyCosmos" id="P50499">
    <property type="glycosylation" value="7 sites, No reported glycans"/>
</dbReference>
<dbReference type="GO" id="GO:0005886">
    <property type="term" value="C:plasma membrane"/>
    <property type="evidence" value="ECO:0007669"/>
    <property type="project" value="UniProtKB-SubCell"/>
</dbReference>
<dbReference type="GO" id="GO:0098552">
    <property type="term" value="C:side of membrane"/>
    <property type="evidence" value="ECO:0007669"/>
    <property type="project" value="UniProtKB-KW"/>
</dbReference>
<dbReference type="GO" id="GO:0007155">
    <property type="term" value="P:cell adhesion"/>
    <property type="evidence" value="ECO:0007669"/>
    <property type="project" value="InterPro"/>
</dbReference>
<dbReference type="InterPro" id="IPR001136">
    <property type="entry name" value="MSA2"/>
</dbReference>
<dbReference type="Pfam" id="PF00985">
    <property type="entry name" value="MSA_2"/>
    <property type="match status" value="1"/>
</dbReference>
<dbReference type="PIRSF" id="PIRSF003575">
    <property type="entry name" value="MSA_2"/>
    <property type="match status" value="1"/>
</dbReference>